<feature type="chain" id="PRO_0000142709" description="Phosphoprotein">
    <location>
        <begin position="1"/>
        <end position="507"/>
    </location>
</feature>
<feature type="region of interest" description="Disordered" evidence="4">
    <location>
        <begin position="137"/>
        <end position="307"/>
    </location>
</feature>
<feature type="region of interest" description="Multimerization" evidence="3">
    <location>
        <begin position="304"/>
        <end position="376"/>
    </location>
</feature>
<feature type="region of interest" description="Interaction with the nucleocapsid (N-RNA)" evidence="3">
    <location>
        <begin position="459"/>
        <end position="507"/>
    </location>
</feature>
<feature type="compositionally biased region" description="Acidic residues" evidence="4">
    <location>
        <begin position="137"/>
        <end position="160"/>
    </location>
</feature>
<feature type="compositionally biased region" description="Basic and acidic residues" evidence="4">
    <location>
        <begin position="189"/>
        <end position="199"/>
    </location>
</feature>
<feature type="compositionally biased region" description="Basic and acidic residues" evidence="4">
    <location>
        <begin position="222"/>
        <end position="233"/>
    </location>
</feature>
<feature type="compositionally biased region" description="Low complexity" evidence="4">
    <location>
        <begin position="236"/>
        <end position="252"/>
    </location>
</feature>
<feature type="compositionally biased region" description="Low complexity" evidence="4">
    <location>
        <begin position="266"/>
        <end position="278"/>
    </location>
</feature>
<feature type="compositionally biased region" description="Polar residues" evidence="4">
    <location>
        <begin position="279"/>
        <end position="301"/>
    </location>
</feature>
<feature type="modified residue" description="Phosphoserine" evidence="3">
    <location>
        <position position="86"/>
    </location>
</feature>
<feature type="modified residue" description="Phosphoserine" evidence="3">
    <location>
        <position position="151"/>
    </location>
</feature>
<protein>
    <recommendedName>
        <fullName>Phosphoprotein</fullName>
        <shortName>Protein P</shortName>
    </recommendedName>
</protein>
<gene>
    <name type="primary">P/V</name>
</gene>
<name>PHOSP_RINDK</name>
<organismHost>
    <name type="scientific">Bos indicus</name>
    <name type="common">Zebu</name>
    <dbReference type="NCBI Taxonomy" id="9915"/>
</organismHost>
<organismHost>
    <name type="scientific">Bos taurus</name>
    <name type="common">Bovine</name>
    <dbReference type="NCBI Taxonomy" id="9913"/>
</organismHost>
<organismHost>
    <name type="scientific">Bubalus bubalis</name>
    <name type="common">Domestic water buffalo</name>
    <dbReference type="NCBI Taxonomy" id="89462"/>
</organismHost>
<organismHost>
    <name type="scientific">Capra hircus</name>
    <name type="common">Goat</name>
    <dbReference type="NCBI Taxonomy" id="9925"/>
</organismHost>
<organismHost>
    <name type="scientific">Gazella</name>
    <name type="common">gazelles</name>
    <dbReference type="NCBI Taxonomy" id="9933"/>
</organismHost>
<organismHost>
    <name type="scientific">Giraffa camelopardalis</name>
    <name type="common">Giraffe</name>
    <dbReference type="NCBI Taxonomy" id="9894"/>
</organismHost>
<organismHost>
    <name type="scientific">Hippopotamus</name>
    <dbReference type="NCBI Taxonomy" id="9832"/>
</organismHost>
<organismHost>
    <name type="scientific">Ovis aries</name>
    <name type="common">Sheep</name>
    <dbReference type="NCBI Taxonomy" id="9940"/>
</organismHost>
<organismHost>
    <name type="scientific">Suidae</name>
    <name type="common">pigs</name>
    <dbReference type="NCBI Taxonomy" id="9821"/>
</organismHost>
<reference key="1">
    <citation type="journal article" date="1992" name="Virology">
        <title>Sequence analysis and editing of the phosphoprotein (P) gene of rinderpest virus.</title>
        <authorList>
            <person name="Yamanaka M."/>
            <person name="Dale B."/>
            <person name="Crisp T."/>
            <person name="Cordell B."/>
            <person name="Grubman M."/>
            <person name="Yilma T."/>
        </authorList>
    </citation>
    <scope>NUCLEOTIDE SEQUENCE [MRNA]</scope>
</reference>
<dbReference type="EMBL" id="S44819">
    <property type="protein sequence ID" value="AAB23268.1"/>
    <property type="molecule type" value="mRNA"/>
</dbReference>
<dbReference type="PIR" id="A43387">
    <property type="entry name" value="A43387"/>
</dbReference>
<dbReference type="SMR" id="P35945"/>
<dbReference type="GO" id="GO:0003723">
    <property type="term" value="F:RNA binding"/>
    <property type="evidence" value="ECO:0007669"/>
    <property type="project" value="InterPro"/>
</dbReference>
<dbReference type="GO" id="GO:0003968">
    <property type="term" value="F:RNA-directed RNA polymerase activity"/>
    <property type="evidence" value="ECO:0007669"/>
    <property type="project" value="InterPro"/>
</dbReference>
<dbReference type="GO" id="GO:0006351">
    <property type="term" value="P:DNA-templated transcription"/>
    <property type="evidence" value="ECO:0007669"/>
    <property type="project" value="InterPro"/>
</dbReference>
<dbReference type="GO" id="GO:0019079">
    <property type="term" value="P:viral genome replication"/>
    <property type="evidence" value="ECO:0007669"/>
    <property type="project" value="InterPro"/>
</dbReference>
<dbReference type="CDD" id="cd21031">
    <property type="entry name" value="MEV_P-protein-C_like"/>
    <property type="match status" value="1"/>
</dbReference>
<dbReference type="Gene3D" id="1.20.5.110">
    <property type="match status" value="1"/>
</dbReference>
<dbReference type="Gene3D" id="1.10.8.10">
    <property type="entry name" value="DNA helicase RuvA subunit, C-terminal domain"/>
    <property type="match status" value="1"/>
</dbReference>
<dbReference type="InterPro" id="IPR004897">
    <property type="entry name" value="P/V_Pprotein_paramyxoviral"/>
</dbReference>
<dbReference type="InterPro" id="IPR028243">
    <property type="entry name" value="Paramyxo_P/V_N"/>
</dbReference>
<dbReference type="InterPro" id="IPR016075">
    <property type="entry name" value="RNA_pol_Pprot-P_XD_paramyxovir"/>
</dbReference>
<dbReference type="Pfam" id="PF03210">
    <property type="entry name" value="Paramyx_P_V_C"/>
    <property type="match status" value="1"/>
</dbReference>
<dbReference type="Pfam" id="PF13825">
    <property type="entry name" value="Paramyxo_P_V_N"/>
    <property type="match status" value="1"/>
</dbReference>
<dbReference type="SUPFAM" id="SSF101089">
    <property type="entry name" value="Phosphoprotein XD domain"/>
    <property type="match status" value="1"/>
</dbReference>
<evidence type="ECO:0000250" key="1">
    <source>
        <dbReference type="UniProtKB" id="P04859"/>
    </source>
</evidence>
<evidence type="ECO:0000250" key="2">
    <source>
        <dbReference type="UniProtKB" id="P06162"/>
    </source>
</evidence>
<evidence type="ECO:0000250" key="3">
    <source>
        <dbReference type="UniProtKB" id="Q77M42"/>
    </source>
</evidence>
<evidence type="ECO:0000256" key="4">
    <source>
        <dbReference type="SAM" id="MobiDB-lite"/>
    </source>
</evidence>
<evidence type="ECO:0000305" key="5"/>
<comment type="function">
    <text evidence="2 3">Essential cofactor of the RNA polymerase L that plays a central role in the transcription and replication by forming the polymerase complex with RNA polymerase L and recruiting L to the genomic N-RNA template for RNA synthesis (By similarity). Also plays a central role in the encapsidation of nascent RNA chains by forming the encapsidation complex with the nucleocapsid protein N (N-P complex). Acts as a chaperone for newly synthesized free N protein, so-called N0, allowing encapsidation of nascent RNA chains during replication (By similarity). The nucleoprotein protein N prevents excessive phosphorylation of P, which leads to down-regulation of viral transcription/ replication. Participates, together with N, in the formation of viral factories (viroplasms), which are large inclusions in the host cytoplasm where replication takes place (By similarity).</text>
</comment>
<comment type="subunit">
    <text evidence="2 3">Homotetramer. Interacts (via multimerization domain) with polymerase L; this interaction forms the polymerase L-P complex (By similarity). Interacts (via N-terminus) with N0 (via Ncore); this interaction allows P to chaperon N0 to avoid N polymerization before encapsidation. Interacts (via C-terminus) with N-RNA template; this interaction positions the polymerase on the template for both transcription and replication (By similarity).</text>
</comment>
<comment type="domain">
    <text evidence="1 2 3">The N-terminus consists of a long intrinsically disordered tail. The central part contains the coiled-coil multimerization domain (PMD) (By similarity). Forms a four-stranded coiled coil structure (By similarity). The C-terminus constitutes the alpha-helical domain that binds to the nucleocapsid (N-RNA complex) (By similarity).</text>
</comment>
<comment type="PTM">
    <text evidence="3">Phosphorylation on serines by host CK2 is necessary for the formation of viral factories.</text>
</comment>
<comment type="RNA editing">
    <location>
        <position position="231"/>
    </location>
    <text>Partially edited. RNA editing at this position consists of an insertion of one guanine nucleotide. The sequence displayed here is the P protein, derived from the unedited RNA. The edited RNA version gives rise to the V protein (AC P60169).</text>
</comment>
<comment type="similarity">
    <text evidence="5">Belongs to the morbillivirus P protein family.</text>
</comment>
<sequence length="507" mass="54341">MAEEQAYHVNKGLECIKALRARPLDPLVVEEALAAWVETSEGQTLDRMSSDEAEADHQDISKPCFPAAGPGKSSMSRCHDQGLGGSNSCDEELGAFIGDSSMHSTEVQHYHVYDHSGEKVEGVEDADSILVQSGADDGVEVWGGDEESENSDVDSGEPDPEGSAPADWGSSPISPATRASDVETVEGDEIQKLLEDQSRIRKMTKAGKTLVVPPIPSQERPTASEKPIKKGTDVKSTSSGTMAESSSTGGATRPALKSQWGPSGPNASAENALASASNVSPTQGSKTESGTTTSRISQSNIEPEDDYDDELFSDIQDIKTALAKLHDDQQIIITRLESLVSLKGEIDSIKKQISKQNISISTIEGHLSSVMIAIPGFGKDPNDPTADVDINPDLRPIIGRDSGRALAEVLKKPASERQSKDTGKLGIESKGLLKKEFQLKPIEKKSSSAIRFVPDGSVASRSVIRSIIKSSHLGEDRKDYLMSLLNDIQGSKDLAQFHQMLVKILKN</sequence>
<organism>
    <name type="scientific">Rinderpest virus (strain Kabete O)</name>
    <name type="common">RDV</name>
    <dbReference type="NCBI Taxonomy" id="11242"/>
    <lineage>
        <taxon>Viruses</taxon>
        <taxon>Riboviria</taxon>
        <taxon>Orthornavirae</taxon>
        <taxon>Negarnaviricota</taxon>
        <taxon>Haploviricotina</taxon>
        <taxon>Monjiviricetes</taxon>
        <taxon>Mononegavirales</taxon>
        <taxon>Paramyxoviridae</taxon>
        <taxon>Orthoparamyxovirinae</taxon>
        <taxon>Morbillivirus</taxon>
        <taxon>Morbillivirus pecoris</taxon>
        <taxon>Rinderpest morbillivirus</taxon>
    </lineage>
</organism>
<keyword id="KW-0597">Phosphoprotein</keyword>
<keyword id="KW-0691">RNA editing</keyword>
<keyword id="KW-0693">Viral RNA replication</keyword>
<proteinExistence type="evidence at transcript level"/>
<accession>P35945</accession>